<dbReference type="EMBL" id="CP000472">
    <property type="protein sequence ID" value="ACJ30212.1"/>
    <property type="molecule type" value="Genomic_DNA"/>
</dbReference>
<dbReference type="RefSeq" id="WP_020913559.1">
    <property type="nucleotide sequence ID" value="NC_011566.1"/>
</dbReference>
<dbReference type="SMR" id="B8CQ82"/>
<dbReference type="STRING" id="225849.swp_3519"/>
<dbReference type="KEGG" id="swp:swp_3519"/>
<dbReference type="eggNOG" id="COG0233">
    <property type="taxonomic scope" value="Bacteria"/>
</dbReference>
<dbReference type="HOGENOM" id="CLU_073981_2_1_6"/>
<dbReference type="OrthoDB" id="9804006at2"/>
<dbReference type="Proteomes" id="UP000000753">
    <property type="component" value="Chromosome"/>
</dbReference>
<dbReference type="GO" id="GO:0005829">
    <property type="term" value="C:cytosol"/>
    <property type="evidence" value="ECO:0007669"/>
    <property type="project" value="GOC"/>
</dbReference>
<dbReference type="GO" id="GO:0043023">
    <property type="term" value="F:ribosomal large subunit binding"/>
    <property type="evidence" value="ECO:0007669"/>
    <property type="project" value="TreeGrafter"/>
</dbReference>
<dbReference type="GO" id="GO:0002184">
    <property type="term" value="P:cytoplasmic translational termination"/>
    <property type="evidence" value="ECO:0007669"/>
    <property type="project" value="TreeGrafter"/>
</dbReference>
<dbReference type="CDD" id="cd00520">
    <property type="entry name" value="RRF"/>
    <property type="match status" value="1"/>
</dbReference>
<dbReference type="FunFam" id="1.10.132.20:FF:000001">
    <property type="entry name" value="Ribosome-recycling factor"/>
    <property type="match status" value="1"/>
</dbReference>
<dbReference type="FunFam" id="3.30.1360.40:FF:000001">
    <property type="entry name" value="Ribosome-recycling factor"/>
    <property type="match status" value="1"/>
</dbReference>
<dbReference type="Gene3D" id="3.30.1360.40">
    <property type="match status" value="1"/>
</dbReference>
<dbReference type="Gene3D" id="1.10.132.20">
    <property type="entry name" value="Ribosome-recycling factor"/>
    <property type="match status" value="1"/>
</dbReference>
<dbReference type="HAMAP" id="MF_00040">
    <property type="entry name" value="RRF"/>
    <property type="match status" value="1"/>
</dbReference>
<dbReference type="InterPro" id="IPR002661">
    <property type="entry name" value="Ribosome_recyc_fac"/>
</dbReference>
<dbReference type="InterPro" id="IPR023584">
    <property type="entry name" value="Ribosome_recyc_fac_dom"/>
</dbReference>
<dbReference type="InterPro" id="IPR036191">
    <property type="entry name" value="RRF_sf"/>
</dbReference>
<dbReference type="NCBIfam" id="TIGR00496">
    <property type="entry name" value="frr"/>
    <property type="match status" value="1"/>
</dbReference>
<dbReference type="PANTHER" id="PTHR20982:SF3">
    <property type="entry name" value="MITOCHONDRIAL RIBOSOME RECYCLING FACTOR PSEUDO 1"/>
    <property type="match status" value="1"/>
</dbReference>
<dbReference type="PANTHER" id="PTHR20982">
    <property type="entry name" value="RIBOSOME RECYCLING FACTOR"/>
    <property type="match status" value="1"/>
</dbReference>
<dbReference type="Pfam" id="PF01765">
    <property type="entry name" value="RRF"/>
    <property type="match status" value="1"/>
</dbReference>
<dbReference type="SUPFAM" id="SSF55194">
    <property type="entry name" value="Ribosome recycling factor, RRF"/>
    <property type="match status" value="1"/>
</dbReference>
<keyword id="KW-0963">Cytoplasm</keyword>
<keyword id="KW-0648">Protein biosynthesis</keyword>
<sequence>MINEIKTDAQTRMDKCVESTKTQMAKVRTGRAHPSLLDTIQVPYYGSLTPLKQVASVSIGDARTLNVSVFDRTMIAAVEKAIMSSDLGLNPMSAGATIRIPLPALTEERRKDLIKVVRAEAENGRIAVRNVRRDANSDVKALEKEKECTEDDVRRTEDEVQKFTDAHIKKIDEILAAKEKELMEF</sequence>
<feature type="chain" id="PRO_1000194951" description="Ribosome-recycling factor">
    <location>
        <begin position="1"/>
        <end position="185"/>
    </location>
</feature>
<gene>
    <name evidence="1" type="primary">frr</name>
    <name type="ordered locus">swp_3519</name>
</gene>
<proteinExistence type="inferred from homology"/>
<protein>
    <recommendedName>
        <fullName evidence="1">Ribosome-recycling factor</fullName>
        <shortName evidence="1">RRF</shortName>
    </recommendedName>
    <alternativeName>
        <fullName evidence="1">Ribosome-releasing factor</fullName>
    </alternativeName>
</protein>
<evidence type="ECO:0000255" key="1">
    <source>
        <dbReference type="HAMAP-Rule" id="MF_00040"/>
    </source>
</evidence>
<comment type="function">
    <text evidence="1">Responsible for the release of ribosomes from messenger RNA at the termination of protein biosynthesis. May increase the efficiency of translation by recycling ribosomes from one round of translation to another.</text>
</comment>
<comment type="subcellular location">
    <subcellularLocation>
        <location evidence="1">Cytoplasm</location>
    </subcellularLocation>
</comment>
<comment type="similarity">
    <text evidence="1">Belongs to the RRF family.</text>
</comment>
<name>RRF_SHEPW</name>
<reference key="1">
    <citation type="journal article" date="2008" name="PLoS ONE">
        <title>Environmental adaptation: genomic analysis of the piezotolerant and psychrotolerant deep-sea iron reducing bacterium Shewanella piezotolerans WP3.</title>
        <authorList>
            <person name="Wang F."/>
            <person name="Wang J."/>
            <person name="Jian H."/>
            <person name="Zhang B."/>
            <person name="Li S."/>
            <person name="Wang F."/>
            <person name="Zeng X."/>
            <person name="Gao L."/>
            <person name="Bartlett D.H."/>
            <person name="Yu J."/>
            <person name="Hu S."/>
            <person name="Xiao X."/>
        </authorList>
    </citation>
    <scope>NUCLEOTIDE SEQUENCE [LARGE SCALE GENOMIC DNA]</scope>
    <source>
        <strain>WP3 / JCM 13877</strain>
    </source>
</reference>
<accession>B8CQ82</accession>
<organism>
    <name type="scientific">Shewanella piezotolerans (strain WP3 / JCM 13877)</name>
    <dbReference type="NCBI Taxonomy" id="225849"/>
    <lineage>
        <taxon>Bacteria</taxon>
        <taxon>Pseudomonadati</taxon>
        <taxon>Pseudomonadota</taxon>
        <taxon>Gammaproteobacteria</taxon>
        <taxon>Alteromonadales</taxon>
        <taxon>Shewanellaceae</taxon>
        <taxon>Shewanella</taxon>
    </lineage>
</organism>